<sequence>MSEISAEERESGTVFAPKFDSDGLLTAVVQHVDTREVLMVAFMNADALDATRKTGIAHFFSRSRQTLWKKGGTSGNTLAVSQVLVDCDQDAVILLVEPAGPACHTGARTCFYRELDCGALQDVRT</sequence>
<protein>
    <recommendedName>
        <fullName evidence="1">Phosphoribosyl-AMP cyclohydrolase</fullName>
        <shortName evidence="1">PRA-CH</shortName>
        <ecNumber evidence="1">3.5.4.19</ecNumber>
    </recommendedName>
</protein>
<name>HIS3_ERYLH</name>
<comment type="function">
    <text evidence="1">Catalyzes the hydrolysis of the adenine ring of phosphoribosyl-AMP.</text>
</comment>
<comment type="catalytic activity">
    <reaction evidence="1">
        <text>1-(5-phospho-beta-D-ribosyl)-5'-AMP + H2O = 1-(5-phospho-beta-D-ribosyl)-5-[(5-phospho-beta-D-ribosylamino)methylideneamino]imidazole-4-carboxamide</text>
        <dbReference type="Rhea" id="RHEA:20049"/>
        <dbReference type="ChEBI" id="CHEBI:15377"/>
        <dbReference type="ChEBI" id="CHEBI:58435"/>
        <dbReference type="ChEBI" id="CHEBI:59457"/>
        <dbReference type="EC" id="3.5.4.19"/>
    </reaction>
</comment>
<comment type="cofactor">
    <cofactor evidence="1">
        <name>Mg(2+)</name>
        <dbReference type="ChEBI" id="CHEBI:18420"/>
    </cofactor>
    <text evidence="1">Binds 1 Mg(2+) ion per subunit.</text>
</comment>
<comment type="cofactor">
    <cofactor evidence="1">
        <name>Zn(2+)</name>
        <dbReference type="ChEBI" id="CHEBI:29105"/>
    </cofactor>
    <text evidence="1">Binds 1 zinc ion per subunit.</text>
</comment>
<comment type="pathway">
    <text evidence="1">Amino-acid biosynthesis; L-histidine biosynthesis; L-histidine from 5-phospho-alpha-D-ribose 1-diphosphate: step 3/9.</text>
</comment>
<comment type="subunit">
    <text evidence="1">Homodimer.</text>
</comment>
<comment type="subcellular location">
    <subcellularLocation>
        <location evidence="1">Cytoplasm</location>
    </subcellularLocation>
</comment>
<comment type="similarity">
    <text evidence="1">Belongs to the PRA-CH family.</text>
</comment>
<keyword id="KW-0028">Amino-acid biosynthesis</keyword>
<keyword id="KW-0963">Cytoplasm</keyword>
<keyword id="KW-0368">Histidine biosynthesis</keyword>
<keyword id="KW-0378">Hydrolase</keyword>
<keyword id="KW-0460">Magnesium</keyword>
<keyword id="KW-0479">Metal-binding</keyword>
<keyword id="KW-1185">Reference proteome</keyword>
<keyword id="KW-0862">Zinc</keyword>
<organism>
    <name type="scientific">Erythrobacter litoralis (strain HTCC2594)</name>
    <dbReference type="NCBI Taxonomy" id="314225"/>
    <lineage>
        <taxon>Bacteria</taxon>
        <taxon>Pseudomonadati</taxon>
        <taxon>Pseudomonadota</taxon>
        <taxon>Alphaproteobacteria</taxon>
        <taxon>Sphingomonadales</taxon>
        <taxon>Erythrobacteraceae</taxon>
        <taxon>Erythrobacter/Porphyrobacter group</taxon>
        <taxon>Erythrobacter</taxon>
    </lineage>
</organism>
<dbReference type="EC" id="3.5.4.19" evidence="1"/>
<dbReference type="EMBL" id="CP000157">
    <property type="protein sequence ID" value="ABC63269.1"/>
    <property type="molecule type" value="Genomic_DNA"/>
</dbReference>
<dbReference type="RefSeq" id="WP_011414105.1">
    <property type="nucleotide sequence ID" value="NC_007722.1"/>
</dbReference>
<dbReference type="SMR" id="Q2NAM2"/>
<dbReference type="STRING" id="314225.ELI_05885"/>
<dbReference type="KEGG" id="eli:ELI_05885"/>
<dbReference type="eggNOG" id="COG0139">
    <property type="taxonomic scope" value="Bacteria"/>
</dbReference>
<dbReference type="HOGENOM" id="CLU_048577_5_0_5"/>
<dbReference type="OrthoDB" id="9795769at2"/>
<dbReference type="UniPathway" id="UPA00031">
    <property type="reaction ID" value="UER00008"/>
</dbReference>
<dbReference type="Proteomes" id="UP000008808">
    <property type="component" value="Chromosome"/>
</dbReference>
<dbReference type="GO" id="GO:0005737">
    <property type="term" value="C:cytoplasm"/>
    <property type="evidence" value="ECO:0007669"/>
    <property type="project" value="UniProtKB-SubCell"/>
</dbReference>
<dbReference type="GO" id="GO:0000287">
    <property type="term" value="F:magnesium ion binding"/>
    <property type="evidence" value="ECO:0007669"/>
    <property type="project" value="UniProtKB-UniRule"/>
</dbReference>
<dbReference type="GO" id="GO:0004635">
    <property type="term" value="F:phosphoribosyl-AMP cyclohydrolase activity"/>
    <property type="evidence" value="ECO:0007669"/>
    <property type="project" value="UniProtKB-UniRule"/>
</dbReference>
<dbReference type="GO" id="GO:0008270">
    <property type="term" value="F:zinc ion binding"/>
    <property type="evidence" value="ECO:0007669"/>
    <property type="project" value="UniProtKB-UniRule"/>
</dbReference>
<dbReference type="GO" id="GO:0000105">
    <property type="term" value="P:L-histidine biosynthetic process"/>
    <property type="evidence" value="ECO:0007669"/>
    <property type="project" value="UniProtKB-UniRule"/>
</dbReference>
<dbReference type="FunFam" id="3.10.20.810:FF:000001">
    <property type="entry name" value="Histidine biosynthesis bifunctional protein HisIE"/>
    <property type="match status" value="1"/>
</dbReference>
<dbReference type="Gene3D" id="3.10.20.810">
    <property type="entry name" value="Phosphoribosyl-AMP cyclohydrolase"/>
    <property type="match status" value="1"/>
</dbReference>
<dbReference type="HAMAP" id="MF_01021">
    <property type="entry name" value="HisI"/>
    <property type="match status" value="1"/>
</dbReference>
<dbReference type="InterPro" id="IPR026660">
    <property type="entry name" value="PRA-CH"/>
</dbReference>
<dbReference type="InterPro" id="IPR002496">
    <property type="entry name" value="PRib_AMP_CycHydrolase_dom"/>
</dbReference>
<dbReference type="InterPro" id="IPR038019">
    <property type="entry name" value="PRib_AMP_CycHydrolase_sf"/>
</dbReference>
<dbReference type="NCBIfam" id="NF000768">
    <property type="entry name" value="PRK00051.1"/>
    <property type="match status" value="1"/>
</dbReference>
<dbReference type="PANTHER" id="PTHR42945">
    <property type="entry name" value="HISTIDINE BIOSYNTHESIS BIFUNCTIONAL PROTEIN"/>
    <property type="match status" value="1"/>
</dbReference>
<dbReference type="PANTHER" id="PTHR42945:SF1">
    <property type="entry name" value="HISTIDINE BIOSYNTHESIS BIFUNCTIONAL PROTEIN HIS7"/>
    <property type="match status" value="1"/>
</dbReference>
<dbReference type="Pfam" id="PF01502">
    <property type="entry name" value="PRA-CH"/>
    <property type="match status" value="1"/>
</dbReference>
<dbReference type="SUPFAM" id="SSF141734">
    <property type="entry name" value="HisI-like"/>
    <property type="match status" value="1"/>
</dbReference>
<reference key="1">
    <citation type="journal article" date="2009" name="J. Bacteriol.">
        <title>Complete genome sequence of Erythrobacter litoralis HTCC2594.</title>
        <authorList>
            <person name="Oh H.M."/>
            <person name="Giovannoni S.J."/>
            <person name="Ferriera S."/>
            <person name="Johnson J."/>
            <person name="Cho J.C."/>
        </authorList>
    </citation>
    <scope>NUCLEOTIDE SEQUENCE [LARGE SCALE GENOMIC DNA]</scope>
    <source>
        <strain>HTCC2594</strain>
    </source>
</reference>
<feature type="chain" id="PRO_0000319687" description="Phosphoribosyl-AMP cyclohydrolase">
    <location>
        <begin position="1"/>
        <end position="125"/>
    </location>
</feature>
<feature type="binding site" evidence="1">
    <location>
        <position position="86"/>
    </location>
    <ligand>
        <name>Mg(2+)</name>
        <dbReference type="ChEBI" id="CHEBI:18420"/>
    </ligand>
</feature>
<feature type="binding site" evidence="1">
    <location>
        <position position="87"/>
    </location>
    <ligand>
        <name>Zn(2+)</name>
        <dbReference type="ChEBI" id="CHEBI:29105"/>
        <note>ligand shared between dimeric partners</note>
    </ligand>
</feature>
<feature type="binding site" evidence="1">
    <location>
        <position position="88"/>
    </location>
    <ligand>
        <name>Mg(2+)</name>
        <dbReference type="ChEBI" id="CHEBI:18420"/>
    </ligand>
</feature>
<feature type="binding site" evidence="1">
    <location>
        <position position="90"/>
    </location>
    <ligand>
        <name>Mg(2+)</name>
        <dbReference type="ChEBI" id="CHEBI:18420"/>
    </ligand>
</feature>
<feature type="binding site" evidence="1">
    <location>
        <position position="103"/>
    </location>
    <ligand>
        <name>Zn(2+)</name>
        <dbReference type="ChEBI" id="CHEBI:29105"/>
        <note>ligand shared between dimeric partners</note>
    </ligand>
</feature>
<feature type="binding site" evidence="1">
    <location>
        <position position="110"/>
    </location>
    <ligand>
        <name>Zn(2+)</name>
        <dbReference type="ChEBI" id="CHEBI:29105"/>
        <note>ligand shared between dimeric partners</note>
    </ligand>
</feature>
<proteinExistence type="inferred from homology"/>
<accession>Q2NAM2</accession>
<gene>
    <name evidence="1" type="primary">hisI</name>
    <name type="ordered locus">ELI_05885</name>
</gene>
<evidence type="ECO:0000255" key="1">
    <source>
        <dbReference type="HAMAP-Rule" id="MF_01021"/>
    </source>
</evidence>